<evidence type="ECO:0000255" key="1">
    <source>
        <dbReference type="HAMAP-Rule" id="MF_01351"/>
    </source>
</evidence>
<evidence type="ECO:0000256" key="2">
    <source>
        <dbReference type="SAM" id="MobiDB-lite"/>
    </source>
</evidence>
<keyword id="KW-0004">4Fe-4S</keyword>
<keyword id="KW-0408">Iron</keyword>
<keyword id="KW-0411">Iron-sulfur</keyword>
<keyword id="KW-0472">Membrane</keyword>
<keyword id="KW-0479">Metal-binding</keyword>
<keyword id="KW-0520">NAD</keyword>
<keyword id="KW-0521">NADP</keyword>
<keyword id="KW-0618">Plastoquinone</keyword>
<keyword id="KW-0874">Quinone</keyword>
<keyword id="KW-0677">Repeat</keyword>
<keyword id="KW-0793">Thylakoid</keyword>
<keyword id="KW-1278">Translocase</keyword>
<feature type="chain" id="PRO_1000143655" description="NAD(P)H-quinone oxidoreductase subunit I">
    <location>
        <begin position="1"/>
        <end position="190"/>
    </location>
</feature>
<feature type="domain" description="4Fe-4S ferredoxin-type 1" evidence="1">
    <location>
        <begin position="55"/>
        <end position="84"/>
    </location>
</feature>
<feature type="domain" description="4Fe-4S ferredoxin-type 2" evidence="1">
    <location>
        <begin position="95"/>
        <end position="124"/>
    </location>
</feature>
<feature type="region of interest" description="Disordered" evidence="2">
    <location>
        <begin position="169"/>
        <end position="190"/>
    </location>
</feature>
<feature type="binding site" evidence="1">
    <location>
        <position position="64"/>
    </location>
    <ligand>
        <name>[4Fe-4S] cluster</name>
        <dbReference type="ChEBI" id="CHEBI:49883"/>
        <label>1</label>
    </ligand>
</feature>
<feature type="binding site" evidence="1">
    <location>
        <position position="67"/>
    </location>
    <ligand>
        <name>[4Fe-4S] cluster</name>
        <dbReference type="ChEBI" id="CHEBI:49883"/>
        <label>1</label>
    </ligand>
</feature>
<feature type="binding site" evidence="1">
    <location>
        <position position="70"/>
    </location>
    <ligand>
        <name>[4Fe-4S] cluster</name>
        <dbReference type="ChEBI" id="CHEBI:49883"/>
        <label>1</label>
    </ligand>
</feature>
<feature type="binding site" evidence="1">
    <location>
        <position position="74"/>
    </location>
    <ligand>
        <name>[4Fe-4S] cluster</name>
        <dbReference type="ChEBI" id="CHEBI:49883"/>
        <label>2</label>
    </ligand>
</feature>
<feature type="binding site" evidence="1">
    <location>
        <position position="104"/>
    </location>
    <ligand>
        <name>[4Fe-4S] cluster</name>
        <dbReference type="ChEBI" id="CHEBI:49883"/>
        <label>2</label>
    </ligand>
</feature>
<feature type="binding site" evidence="1">
    <location>
        <position position="107"/>
    </location>
    <ligand>
        <name>[4Fe-4S] cluster</name>
        <dbReference type="ChEBI" id="CHEBI:49883"/>
        <label>2</label>
    </ligand>
</feature>
<feature type="binding site" evidence="1">
    <location>
        <position position="110"/>
    </location>
    <ligand>
        <name>[4Fe-4S] cluster</name>
        <dbReference type="ChEBI" id="CHEBI:49883"/>
        <label>2</label>
    </ligand>
</feature>
<feature type="binding site" evidence="1">
    <location>
        <position position="114"/>
    </location>
    <ligand>
        <name>[4Fe-4S] cluster</name>
        <dbReference type="ChEBI" id="CHEBI:49883"/>
        <label>1</label>
    </ligand>
</feature>
<name>NDHI_MICAN</name>
<proteinExistence type="inferred from homology"/>
<comment type="function">
    <text evidence="1">NDH-1 shuttles electrons from an unknown electron donor, via FMN and iron-sulfur (Fe-S) centers, to quinones in the respiratory and/or the photosynthetic chain. The immediate electron acceptor for the enzyme in this species is believed to be plastoquinone. Couples the redox reaction to proton translocation, and thus conserves the redox energy in a proton gradient.</text>
</comment>
<comment type="catalytic activity">
    <reaction evidence="1">
        <text>a plastoquinone + NADH + (n+1) H(+)(in) = a plastoquinol + NAD(+) + n H(+)(out)</text>
        <dbReference type="Rhea" id="RHEA:42608"/>
        <dbReference type="Rhea" id="RHEA-COMP:9561"/>
        <dbReference type="Rhea" id="RHEA-COMP:9562"/>
        <dbReference type="ChEBI" id="CHEBI:15378"/>
        <dbReference type="ChEBI" id="CHEBI:17757"/>
        <dbReference type="ChEBI" id="CHEBI:57540"/>
        <dbReference type="ChEBI" id="CHEBI:57945"/>
        <dbReference type="ChEBI" id="CHEBI:62192"/>
    </reaction>
</comment>
<comment type="catalytic activity">
    <reaction evidence="1">
        <text>a plastoquinone + NADPH + (n+1) H(+)(in) = a plastoquinol + NADP(+) + n H(+)(out)</text>
        <dbReference type="Rhea" id="RHEA:42612"/>
        <dbReference type="Rhea" id="RHEA-COMP:9561"/>
        <dbReference type="Rhea" id="RHEA-COMP:9562"/>
        <dbReference type="ChEBI" id="CHEBI:15378"/>
        <dbReference type="ChEBI" id="CHEBI:17757"/>
        <dbReference type="ChEBI" id="CHEBI:57783"/>
        <dbReference type="ChEBI" id="CHEBI:58349"/>
        <dbReference type="ChEBI" id="CHEBI:62192"/>
    </reaction>
</comment>
<comment type="cofactor">
    <cofactor evidence="1">
        <name>[4Fe-4S] cluster</name>
        <dbReference type="ChEBI" id="CHEBI:49883"/>
    </cofactor>
    <text evidence="1">Binds 2 [4Fe-4S] clusters per subunit.</text>
</comment>
<comment type="subunit">
    <text evidence="1">NDH-1 is composed of at least 11 different subunits.</text>
</comment>
<comment type="subcellular location">
    <subcellularLocation>
        <location evidence="1">Cellular thylakoid membrane</location>
        <topology evidence="1">Peripheral membrane protein</topology>
    </subcellularLocation>
</comment>
<comment type="similarity">
    <text evidence="1">Belongs to the complex I 23 kDa subunit family.</text>
</comment>
<organism>
    <name type="scientific">Microcystis aeruginosa (strain NIES-843 / IAM M-2473)</name>
    <dbReference type="NCBI Taxonomy" id="449447"/>
    <lineage>
        <taxon>Bacteria</taxon>
        <taxon>Bacillati</taxon>
        <taxon>Cyanobacteriota</taxon>
        <taxon>Cyanophyceae</taxon>
        <taxon>Oscillatoriophycideae</taxon>
        <taxon>Chroococcales</taxon>
        <taxon>Microcystaceae</taxon>
        <taxon>Microcystis</taxon>
    </lineage>
</organism>
<reference key="1">
    <citation type="journal article" date="2007" name="DNA Res.">
        <title>Complete genomic structure of the bloom-forming toxic cyanobacterium Microcystis aeruginosa NIES-843.</title>
        <authorList>
            <person name="Kaneko T."/>
            <person name="Nakajima N."/>
            <person name="Okamoto S."/>
            <person name="Suzuki I."/>
            <person name="Tanabe Y."/>
            <person name="Tamaoki M."/>
            <person name="Nakamura Y."/>
            <person name="Kasai F."/>
            <person name="Watanabe A."/>
            <person name="Kawashima K."/>
            <person name="Kishida Y."/>
            <person name="Ono A."/>
            <person name="Shimizu Y."/>
            <person name="Takahashi C."/>
            <person name="Minami C."/>
            <person name="Fujishiro T."/>
            <person name="Kohara M."/>
            <person name="Katoh M."/>
            <person name="Nakazaki N."/>
            <person name="Nakayama S."/>
            <person name="Yamada M."/>
            <person name="Tabata S."/>
            <person name="Watanabe M.M."/>
        </authorList>
    </citation>
    <scope>NUCLEOTIDE SEQUENCE [LARGE SCALE GENOMIC DNA]</scope>
    <source>
        <strain>NIES-843 / IAM M-247</strain>
    </source>
</reference>
<dbReference type="EC" id="7.1.1.-" evidence="1"/>
<dbReference type="EMBL" id="AP009552">
    <property type="protein sequence ID" value="BAG05466.1"/>
    <property type="molecule type" value="Genomic_DNA"/>
</dbReference>
<dbReference type="RefSeq" id="WP_012267911.1">
    <property type="nucleotide sequence ID" value="NC_010296.1"/>
</dbReference>
<dbReference type="SMR" id="B0JHQ4"/>
<dbReference type="STRING" id="449447.MAE_56440"/>
<dbReference type="PaxDb" id="449447-MAE_56440"/>
<dbReference type="EnsemblBacteria" id="BAG05466">
    <property type="protein sequence ID" value="BAG05466"/>
    <property type="gene ID" value="MAE_56440"/>
</dbReference>
<dbReference type="KEGG" id="mar:MAE_56440"/>
<dbReference type="PATRIC" id="fig|449447.4.peg.5155"/>
<dbReference type="eggNOG" id="COG1143">
    <property type="taxonomic scope" value="Bacteria"/>
</dbReference>
<dbReference type="HOGENOM" id="CLU_122804_0_0_3"/>
<dbReference type="BioCyc" id="MAER449447:MAE_RS24580-MONOMER"/>
<dbReference type="Proteomes" id="UP000001510">
    <property type="component" value="Chromosome"/>
</dbReference>
<dbReference type="GO" id="GO:0031676">
    <property type="term" value="C:plasma membrane-derived thylakoid membrane"/>
    <property type="evidence" value="ECO:0007669"/>
    <property type="project" value="UniProtKB-SubCell"/>
</dbReference>
<dbReference type="GO" id="GO:0051539">
    <property type="term" value="F:4 iron, 4 sulfur cluster binding"/>
    <property type="evidence" value="ECO:0007669"/>
    <property type="project" value="UniProtKB-KW"/>
</dbReference>
<dbReference type="GO" id="GO:0005506">
    <property type="term" value="F:iron ion binding"/>
    <property type="evidence" value="ECO:0007669"/>
    <property type="project" value="UniProtKB-UniRule"/>
</dbReference>
<dbReference type="GO" id="GO:0008137">
    <property type="term" value="F:NADH dehydrogenase (ubiquinone) activity"/>
    <property type="evidence" value="ECO:0007669"/>
    <property type="project" value="InterPro"/>
</dbReference>
<dbReference type="GO" id="GO:0048038">
    <property type="term" value="F:quinone binding"/>
    <property type="evidence" value="ECO:0007669"/>
    <property type="project" value="UniProtKB-KW"/>
</dbReference>
<dbReference type="GO" id="GO:0019684">
    <property type="term" value="P:photosynthesis, light reaction"/>
    <property type="evidence" value="ECO:0007669"/>
    <property type="project" value="UniProtKB-UniRule"/>
</dbReference>
<dbReference type="Gene3D" id="3.30.70.3270">
    <property type="match status" value="1"/>
</dbReference>
<dbReference type="HAMAP" id="MF_01351">
    <property type="entry name" value="NDH1_NuoI"/>
    <property type="match status" value="1"/>
</dbReference>
<dbReference type="InterPro" id="IPR017896">
    <property type="entry name" value="4Fe4S_Fe-S-bd"/>
</dbReference>
<dbReference type="InterPro" id="IPR017900">
    <property type="entry name" value="4Fe4S_Fe_S_CS"/>
</dbReference>
<dbReference type="InterPro" id="IPR010226">
    <property type="entry name" value="NADH_quinone_OxRdtase_chainI"/>
</dbReference>
<dbReference type="InterPro" id="IPR004497">
    <property type="entry name" value="NDHI"/>
</dbReference>
<dbReference type="NCBIfam" id="TIGR00403">
    <property type="entry name" value="ndhI"/>
    <property type="match status" value="1"/>
</dbReference>
<dbReference type="NCBIfam" id="TIGR01971">
    <property type="entry name" value="NuoI"/>
    <property type="match status" value="1"/>
</dbReference>
<dbReference type="NCBIfam" id="NF004537">
    <property type="entry name" value="PRK05888.1-3"/>
    <property type="match status" value="1"/>
</dbReference>
<dbReference type="PANTHER" id="PTHR47275">
    <property type="entry name" value="NAD(P)H-QUINONE OXIDOREDUCTASE SUBUNIT I, CHLOROPLASTIC"/>
    <property type="match status" value="1"/>
</dbReference>
<dbReference type="PANTHER" id="PTHR47275:SF1">
    <property type="entry name" value="NAD(P)H-QUINONE OXIDOREDUCTASE SUBUNIT I, CHLOROPLASTIC"/>
    <property type="match status" value="1"/>
</dbReference>
<dbReference type="Pfam" id="PF12838">
    <property type="entry name" value="Fer4_7"/>
    <property type="match status" value="1"/>
</dbReference>
<dbReference type="SUPFAM" id="SSF54862">
    <property type="entry name" value="4Fe-4S ferredoxins"/>
    <property type="match status" value="1"/>
</dbReference>
<dbReference type="PROSITE" id="PS00198">
    <property type="entry name" value="4FE4S_FER_1"/>
    <property type="match status" value="2"/>
</dbReference>
<dbReference type="PROSITE" id="PS51379">
    <property type="entry name" value="4FE4S_FER_2"/>
    <property type="match status" value="2"/>
</dbReference>
<sequence>MFNILKQVSDYAKGSIQAAKYIGEGLSVTFDHMRRRPITVQYPYEKLIPSERYRGRIHFEFDKCIACEVCVRVCPINLPVVDWTFNKEIKKKELKHYSIDFGVCIFCGNCVEYCPTNCLSMTEEYELASYDRHELNYDNVALGRLPYKVTQDPMVTPLRELGYLPKGVIEPHDLPAGSQRAGKRPEEITD</sequence>
<accession>B0JHQ4</accession>
<gene>
    <name evidence="1" type="primary">ndhI</name>
    <name type="ordered locus">MAE_56440</name>
</gene>
<protein>
    <recommendedName>
        <fullName evidence="1">NAD(P)H-quinone oxidoreductase subunit I</fullName>
        <ecNumber evidence="1">7.1.1.-</ecNumber>
    </recommendedName>
    <alternativeName>
        <fullName evidence="1">NAD(P)H dehydrogenase I subunit I</fullName>
    </alternativeName>
    <alternativeName>
        <fullName evidence="1">NDH-1 subunit I</fullName>
        <shortName evidence="1">NDH-I</shortName>
    </alternativeName>
</protein>